<comment type="function">
    <text evidence="1">Excises uracil residues from the DNA which can arise as a result of misincorporation of dUMP residues by DNA polymerase or due to deamination of cytosine.</text>
</comment>
<comment type="catalytic activity">
    <reaction evidence="1">
        <text>Hydrolyzes single-stranded DNA or mismatched double-stranded DNA and polynucleotides, releasing free uracil.</text>
        <dbReference type="EC" id="3.2.2.27"/>
    </reaction>
</comment>
<comment type="subcellular location">
    <subcellularLocation>
        <location evidence="1">Cytoplasm</location>
    </subcellularLocation>
</comment>
<comment type="similarity">
    <text evidence="1">Belongs to the uracil-DNA glycosylase (UDG) superfamily. UNG family.</text>
</comment>
<proteinExistence type="inferred from homology"/>
<protein>
    <recommendedName>
        <fullName evidence="1">Uracil-DNA glycosylase</fullName>
        <shortName evidence="1">UDG</shortName>
        <ecNumber evidence="1">3.2.2.27</ecNumber>
    </recommendedName>
</protein>
<organism>
    <name type="scientific">Yersinia pseudotuberculosis serotype O:1b (strain IP 31758)</name>
    <dbReference type="NCBI Taxonomy" id="349747"/>
    <lineage>
        <taxon>Bacteria</taxon>
        <taxon>Pseudomonadati</taxon>
        <taxon>Pseudomonadota</taxon>
        <taxon>Gammaproteobacteria</taxon>
        <taxon>Enterobacterales</taxon>
        <taxon>Yersiniaceae</taxon>
        <taxon>Yersinia</taxon>
    </lineage>
</organism>
<reference key="1">
    <citation type="journal article" date="2007" name="PLoS Genet.">
        <title>The complete genome sequence of Yersinia pseudotuberculosis IP31758, the causative agent of Far East scarlet-like fever.</title>
        <authorList>
            <person name="Eppinger M."/>
            <person name="Rosovitz M.J."/>
            <person name="Fricke W.F."/>
            <person name="Rasko D.A."/>
            <person name="Kokorina G."/>
            <person name="Fayolle C."/>
            <person name="Lindler L.E."/>
            <person name="Carniel E."/>
            <person name="Ravel J."/>
        </authorList>
    </citation>
    <scope>NUCLEOTIDE SEQUENCE [LARGE SCALE GENOMIC DNA]</scope>
    <source>
        <strain>IP 31758</strain>
    </source>
</reference>
<accession>A7FFS4</accession>
<keyword id="KW-0963">Cytoplasm</keyword>
<keyword id="KW-0227">DNA damage</keyword>
<keyword id="KW-0234">DNA repair</keyword>
<keyword id="KW-0378">Hydrolase</keyword>
<dbReference type="EC" id="3.2.2.27" evidence="1"/>
<dbReference type="EMBL" id="CP000720">
    <property type="protein sequence ID" value="ABS47174.1"/>
    <property type="molecule type" value="Genomic_DNA"/>
</dbReference>
<dbReference type="RefSeq" id="WP_012104779.1">
    <property type="nucleotide sequence ID" value="NC_009708.1"/>
</dbReference>
<dbReference type="SMR" id="A7FFS4"/>
<dbReference type="KEGG" id="ypi:YpsIP31758_1121"/>
<dbReference type="HOGENOM" id="CLU_032162_3_0_6"/>
<dbReference type="Proteomes" id="UP000002412">
    <property type="component" value="Chromosome"/>
</dbReference>
<dbReference type="GO" id="GO:0005737">
    <property type="term" value="C:cytoplasm"/>
    <property type="evidence" value="ECO:0007669"/>
    <property type="project" value="UniProtKB-SubCell"/>
</dbReference>
<dbReference type="GO" id="GO:0004844">
    <property type="term" value="F:uracil DNA N-glycosylase activity"/>
    <property type="evidence" value="ECO:0007669"/>
    <property type="project" value="UniProtKB-UniRule"/>
</dbReference>
<dbReference type="GO" id="GO:0097510">
    <property type="term" value="P:base-excision repair, AP site formation via deaminated base removal"/>
    <property type="evidence" value="ECO:0007669"/>
    <property type="project" value="TreeGrafter"/>
</dbReference>
<dbReference type="CDD" id="cd10027">
    <property type="entry name" value="UDG-F1-like"/>
    <property type="match status" value="1"/>
</dbReference>
<dbReference type="FunFam" id="3.40.470.10:FF:000001">
    <property type="entry name" value="Uracil-DNA glycosylase"/>
    <property type="match status" value="1"/>
</dbReference>
<dbReference type="Gene3D" id="3.40.470.10">
    <property type="entry name" value="Uracil-DNA glycosylase-like domain"/>
    <property type="match status" value="1"/>
</dbReference>
<dbReference type="HAMAP" id="MF_00148">
    <property type="entry name" value="UDG"/>
    <property type="match status" value="1"/>
</dbReference>
<dbReference type="InterPro" id="IPR002043">
    <property type="entry name" value="UDG_fam1"/>
</dbReference>
<dbReference type="InterPro" id="IPR018085">
    <property type="entry name" value="Ura-DNA_Glyclase_AS"/>
</dbReference>
<dbReference type="InterPro" id="IPR005122">
    <property type="entry name" value="Uracil-DNA_glycosylase-like"/>
</dbReference>
<dbReference type="InterPro" id="IPR036895">
    <property type="entry name" value="Uracil-DNA_glycosylase-like_sf"/>
</dbReference>
<dbReference type="NCBIfam" id="NF003588">
    <property type="entry name" value="PRK05254.1-1"/>
    <property type="match status" value="1"/>
</dbReference>
<dbReference type="NCBIfam" id="NF003589">
    <property type="entry name" value="PRK05254.1-2"/>
    <property type="match status" value="1"/>
</dbReference>
<dbReference type="NCBIfam" id="NF003591">
    <property type="entry name" value="PRK05254.1-4"/>
    <property type="match status" value="1"/>
</dbReference>
<dbReference type="NCBIfam" id="NF003592">
    <property type="entry name" value="PRK05254.1-5"/>
    <property type="match status" value="1"/>
</dbReference>
<dbReference type="NCBIfam" id="TIGR00628">
    <property type="entry name" value="ung"/>
    <property type="match status" value="1"/>
</dbReference>
<dbReference type="PANTHER" id="PTHR11264">
    <property type="entry name" value="URACIL-DNA GLYCOSYLASE"/>
    <property type="match status" value="1"/>
</dbReference>
<dbReference type="PANTHER" id="PTHR11264:SF0">
    <property type="entry name" value="URACIL-DNA GLYCOSYLASE"/>
    <property type="match status" value="1"/>
</dbReference>
<dbReference type="Pfam" id="PF03167">
    <property type="entry name" value="UDG"/>
    <property type="match status" value="1"/>
</dbReference>
<dbReference type="SMART" id="SM00986">
    <property type="entry name" value="UDG"/>
    <property type="match status" value="1"/>
</dbReference>
<dbReference type="SMART" id="SM00987">
    <property type="entry name" value="UreE_C"/>
    <property type="match status" value="1"/>
</dbReference>
<dbReference type="SUPFAM" id="SSF52141">
    <property type="entry name" value="Uracil-DNA glycosylase-like"/>
    <property type="match status" value="1"/>
</dbReference>
<dbReference type="PROSITE" id="PS00130">
    <property type="entry name" value="U_DNA_GLYCOSYLASE"/>
    <property type="match status" value="1"/>
</dbReference>
<feature type="chain" id="PRO_1000058131" description="Uracil-DNA glycosylase">
    <location>
        <begin position="1"/>
        <end position="228"/>
    </location>
</feature>
<feature type="active site" description="Proton acceptor" evidence="1">
    <location>
        <position position="64"/>
    </location>
</feature>
<gene>
    <name evidence="1" type="primary">ung</name>
    <name type="ordered locus">YpsIP31758_1121</name>
</gene>
<sequence>MSPSLTWHDVIGQEKEQPYFKDTLAYVAAERRAGKTIYPPQKDIFNAFRLTELDQVKVVILGQDPYHGPNQAHGLSFSVLPGVPAPPSLGNIYKELVTDIPGFQRPNHGFLQSWAEQGVLLLNTVLTVEAGKAHSHANLGWETFTDKVIVALNEHREGVIFMLWGSHAQKKGRIINTERHYILKAPHPSPLSAHRGFLGCKHFSQANQLLQQQNQQPIDWQPKLPAVE</sequence>
<evidence type="ECO:0000255" key="1">
    <source>
        <dbReference type="HAMAP-Rule" id="MF_00148"/>
    </source>
</evidence>
<name>UNG_YERP3</name>